<gene>
    <name type="primary">tom20</name>
    <name type="ORF">SPAC6F12.07</name>
</gene>
<organism>
    <name type="scientific">Schizosaccharomyces pombe (strain 972 / ATCC 24843)</name>
    <name type="common">Fission yeast</name>
    <dbReference type="NCBI Taxonomy" id="284812"/>
    <lineage>
        <taxon>Eukaryota</taxon>
        <taxon>Fungi</taxon>
        <taxon>Dikarya</taxon>
        <taxon>Ascomycota</taxon>
        <taxon>Taphrinomycotina</taxon>
        <taxon>Schizosaccharomycetes</taxon>
        <taxon>Schizosaccharomycetales</taxon>
        <taxon>Schizosaccharomycetaceae</taxon>
        <taxon>Schizosaccharomyces</taxon>
    </lineage>
</organism>
<feature type="chain" id="PRO_0000051549" description="Mitochondrial import receptor subunit tom20">
    <location>
        <begin position="1"/>
        <end position="152"/>
    </location>
</feature>
<feature type="topological domain" description="Mitochondrial intermembrane" evidence="2">
    <location>
        <begin position="1"/>
        <end position="4"/>
    </location>
</feature>
<feature type="transmembrane region" description="Helical" evidence="2">
    <location>
        <begin position="5"/>
        <end position="22"/>
    </location>
</feature>
<feature type="topological domain" description="Cytoplasmic" evidence="2">
    <location>
        <begin position="23"/>
        <end position="152"/>
    </location>
</feature>
<reference key="1">
    <citation type="journal article" date="2002" name="Nature">
        <title>The genome sequence of Schizosaccharomyces pombe.</title>
        <authorList>
            <person name="Wood V."/>
            <person name="Gwilliam R."/>
            <person name="Rajandream M.A."/>
            <person name="Lyne M.H."/>
            <person name="Lyne R."/>
            <person name="Stewart A."/>
            <person name="Sgouros J.G."/>
            <person name="Peat N."/>
            <person name="Hayles J."/>
            <person name="Baker S.G."/>
            <person name="Basham D."/>
            <person name="Bowman S."/>
            <person name="Brooks K."/>
            <person name="Brown D."/>
            <person name="Brown S."/>
            <person name="Chillingworth T."/>
            <person name="Churcher C.M."/>
            <person name="Collins M."/>
            <person name="Connor R."/>
            <person name="Cronin A."/>
            <person name="Davis P."/>
            <person name="Feltwell T."/>
            <person name="Fraser A."/>
            <person name="Gentles S."/>
            <person name="Goble A."/>
            <person name="Hamlin N."/>
            <person name="Harris D.E."/>
            <person name="Hidalgo J."/>
            <person name="Hodgson G."/>
            <person name="Holroyd S."/>
            <person name="Hornsby T."/>
            <person name="Howarth S."/>
            <person name="Huckle E.J."/>
            <person name="Hunt S."/>
            <person name="Jagels K."/>
            <person name="James K.D."/>
            <person name="Jones L."/>
            <person name="Jones M."/>
            <person name="Leather S."/>
            <person name="McDonald S."/>
            <person name="McLean J."/>
            <person name="Mooney P."/>
            <person name="Moule S."/>
            <person name="Mungall K.L."/>
            <person name="Murphy L.D."/>
            <person name="Niblett D."/>
            <person name="Odell C."/>
            <person name="Oliver K."/>
            <person name="O'Neil S."/>
            <person name="Pearson D."/>
            <person name="Quail M.A."/>
            <person name="Rabbinowitsch E."/>
            <person name="Rutherford K.M."/>
            <person name="Rutter S."/>
            <person name="Saunders D."/>
            <person name="Seeger K."/>
            <person name="Sharp S."/>
            <person name="Skelton J."/>
            <person name="Simmonds M.N."/>
            <person name="Squares R."/>
            <person name="Squares S."/>
            <person name="Stevens K."/>
            <person name="Taylor K."/>
            <person name="Taylor R.G."/>
            <person name="Tivey A."/>
            <person name="Walsh S.V."/>
            <person name="Warren T."/>
            <person name="Whitehead S."/>
            <person name="Woodward J.R."/>
            <person name="Volckaert G."/>
            <person name="Aert R."/>
            <person name="Robben J."/>
            <person name="Grymonprez B."/>
            <person name="Weltjens I."/>
            <person name="Vanstreels E."/>
            <person name="Rieger M."/>
            <person name="Schaefer M."/>
            <person name="Mueller-Auer S."/>
            <person name="Gabel C."/>
            <person name="Fuchs M."/>
            <person name="Duesterhoeft A."/>
            <person name="Fritzc C."/>
            <person name="Holzer E."/>
            <person name="Moestl D."/>
            <person name="Hilbert H."/>
            <person name="Borzym K."/>
            <person name="Langer I."/>
            <person name="Beck A."/>
            <person name="Lehrach H."/>
            <person name="Reinhardt R."/>
            <person name="Pohl T.M."/>
            <person name="Eger P."/>
            <person name="Zimmermann W."/>
            <person name="Wedler H."/>
            <person name="Wambutt R."/>
            <person name="Purnelle B."/>
            <person name="Goffeau A."/>
            <person name="Cadieu E."/>
            <person name="Dreano S."/>
            <person name="Gloux S."/>
            <person name="Lelaure V."/>
            <person name="Mottier S."/>
            <person name="Galibert F."/>
            <person name="Aves S.J."/>
            <person name="Xiang Z."/>
            <person name="Hunt C."/>
            <person name="Moore K."/>
            <person name="Hurst S.M."/>
            <person name="Lucas M."/>
            <person name="Rochet M."/>
            <person name="Gaillardin C."/>
            <person name="Tallada V.A."/>
            <person name="Garzon A."/>
            <person name="Thode G."/>
            <person name="Daga R.R."/>
            <person name="Cruzado L."/>
            <person name="Jimenez J."/>
            <person name="Sanchez M."/>
            <person name="del Rey F."/>
            <person name="Benito J."/>
            <person name="Dominguez A."/>
            <person name="Revuelta J.L."/>
            <person name="Moreno S."/>
            <person name="Armstrong J."/>
            <person name="Forsburg S.L."/>
            <person name="Cerutti L."/>
            <person name="Lowe T."/>
            <person name="McCombie W.R."/>
            <person name="Paulsen I."/>
            <person name="Potashkin J."/>
            <person name="Shpakovski G.V."/>
            <person name="Ussery D."/>
            <person name="Barrell B.G."/>
            <person name="Nurse P."/>
        </authorList>
    </citation>
    <scope>NUCLEOTIDE SEQUENCE [LARGE SCALE GENOMIC DNA]</scope>
    <source>
        <strain>972 / ATCC 24843</strain>
    </source>
</reference>
<dbReference type="EMBL" id="CU329670">
    <property type="protein sequence ID" value="CAB11091.1"/>
    <property type="molecule type" value="Genomic_DNA"/>
</dbReference>
<dbReference type="PIR" id="T11658">
    <property type="entry name" value="T11658"/>
</dbReference>
<dbReference type="RefSeq" id="NP_593293.1">
    <property type="nucleotide sequence ID" value="NM_001018723.2"/>
</dbReference>
<dbReference type="SMR" id="O14225"/>
<dbReference type="BioGRID" id="279399">
    <property type="interactions" value="3"/>
</dbReference>
<dbReference type="FunCoup" id="O14225">
    <property type="interactions" value="199"/>
</dbReference>
<dbReference type="STRING" id="284812.O14225"/>
<dbReference type="PaxDb" id="4896-SPAC6F12.07.1"/>
<dbReference type="EnsemblFungi" id="SPAC6F12.07.1">
    <property type="protein sequence ID" value="SPAC6F12.07.1:pep"/>
    <property type="gene ID" value="SPAC6F12.07"/>
</dbReference>
<dbReference type="GeneID" id="2542959"/>
<dbReference type="KEGG" id="spo:2542959"/>
<dbReference type="PomBase" id="SPAC6F12.07">
    <property type="gene designation" value="tom20"/>
</dbReference>
<dbReference type="VEuPathDB" id="FungiDB:SPAC6F12.07"/>
<dbReference type="eggNOG" id="KOG4056">
    <property type="taxonomic scope" value="Eukaryota"/>
</dbReference>
<dbReference type="HOGENOM" id="CLU_090411_2_0_1"/>
<dbReference type="InParanoid" id="O14225"/>
<dbReference type="OMA" id="DMIAYDG"/>
<dbReference type="PhylomeDB" id="O14225"/>
<dbReference type="Reactome" id="R-SPO-5205685">
    <property type="pathway name" value="PINK1-PRKN Mediated Mitophagy"/>
</dbReference>
<dbReference type="Reactome" id="R-SPO-5689880">
    <property type="pathway name" value="Ub-specific processing proteases"/>
</dbReference>
<dbReference type="PRO" id="PR:O14225"/>
<dbReference type="Proteomes" id="UP000002485">
    <property type="component" value="Chromosome I"/>
</dbReference>
<dbReference type="GO" id="GO:0005742">
    <property type="term" value="C:mitochondrial outer membrane translocase complex"/>
    <property type="evidence" value="ECO:0000318"/>
    <property type="project" value="GO_Central"/>
</dbReference>
<dbReference type="GO" id="GO:0005739">
    <property type="term" value="C:mitochondrion"/>
    <property type="evidence" value="ECO:0007005"/>
    <property type="project" value="PomBase"/>
</dbReference>
<dbReference type="GO" id="GO:0016887">
    <property type="term" value="F:ATP hydrolysis activity"/>
    <property type="evidence" value="ECO:0000305"/>
    <property type="project" value="PomBase"/>
</dbReference>
<dbReference type="GO" id="GO:0030943">
    <property type="term" value="F:mitochondrion targeting sequence binding"/>
    <property type="evidence" value="ECO:0000318"/>
    <property type="project" value="GO_Central"/>
</dbReference>
<dbReference type="GO" id="GO:0006886">
    <property type="term" value="P:intracellular protein transport"/>
    <property type="evidence" value="ECO:0007669"/>
    <property type="project" value="InterPro"/>
</dbReference>
<dbReference type="GO" id="GO:0030150">
    <property type="term" value="P:protein import into mitochondrial matrix"/>
    <property type="evidence" value="ECO:0000250"/>
    <property type="project" value="PomBase"/>
</dbReference>
<dbReference type="GO" id="GO:0016031">
    <property type="term" value="P:tRNA import into mitochondrion"/>
    <property type="evidence" value="ECO:0000318"/>
    <property type="project" value="GO_Central"/>
</dbReference>
<dbReference type="FunFam" id="1.20.960.10:FF:000002">
    <property type="entry name" value="Mitochondrial import receptor subunit TOM20"/>
    <property type="match status" value="1"/>
</dbReference>
<dbReference type="Gene3D" id="1.20.960.10">
    <property type="entry name" value="Mitochondrial outer membrane translocase complex, subunit Tom20 domain"/>
    <property type="match status" value="1"/>
</dbReference>
<dbReference type="InterPro" id="IPR002056">
    <property type="entry name" value="MAS20"/>
</dbReference>
<dbReference type="InterPro" id="IPR023392">
    <property type="entry name" value="Tom20_dom_sf"/>
</dbReference>
<dbReference type="NCBIfam" id="TIGR00985">
    <property type="entry name" value="3a0801s04tom"/>
    <property type="match status" value="1"/>
</dbReference>
<dbReference type="PANTHER" id="PTHR12430">
    <property type="entry name" value="MITOCHONDRIAL IMPORT RECEPTOR SUBUNIT TOM20"/>
    <property type="match status" value="1"/>
</dbReference>
<dbReference type="PANTHER" id="PTHR12430:SF0">
    <property type="entry name" value="TRANSLOCASE OF OUTER MITOCHONDRIAL MEMBRANE 20"/>
    <property type="match status" value="1"/>
</dbReference>
<dbReference type="Pfam" id="PF02064">
    <property type="entry name" value="MAS20"/>
    <property type="match status" value="1"/>
</dbReference>
<dbReference type="PIRSF" id="PIRSF037707">
    <property type="entry name" value="MAS20_rcpt"/>
    <property type="match status" value="1"/>
</dbReference>
<dbReference type="PRINTS" id="PR00351">
    <property type="entry name" value="OM20RECEPTOR"/>
</dbReference>
<dbReference type="SUPFAM" id="SSF47157">
    <property type="entry name" value="Mitochondrial import receptor subunit Tom20"/>
    <property type="match status" value="1"/>
</dbReference>
<evidence type="ECO:0000250" key="1"/>
<evidence type="ECO:0000255" key="2"/>
<evidence type="ECO:0000305" key="3"/>
<name>TOM20_SCHPO</name>
<proteinExistence type="inferred from homology"/>
<accession>O14225</accession>
<sequence length="152" mass="17529">MRRSVIIGSLLATAAVGYAIYFDYKRRNDPHFRKTLKRRYKKVHEAKKQEEKLATKKFDITVEEALQVVASTPVPSSAEEKELFFMQQVARGEQLFQQQPDNIKESAACFYSALKVYPQPVELFAIYERTVPEPIMNLLRAMQAKESIPSVE</sequence>
<comment type="function">
    <text evidence="1">Central component of the receptor complex responsible for the recognition and translocation of cytosolically synthesized mitochondrial preproteins. Together with tom22 functions as the transit peptide receptor at the surface of the mitochondrion outer membrane and facilitates the movement of preproteins into the translocation pore (By similarity).</text>
</comment>
<comment type="subunit">
    <text evidence="1">Forms part of the preprotein translocase complex of the outer mitochondrial membrane (TOM complex) which consists of at least 8 different proteins (tom5, tom6, tom7, tom20, tom22, tom37, tom40 and tom70).</text>
</comment>
<comment type="subcellular location">
    <subcellularLocation>
        <location evidence="3">Mitochondrion outer membrane</location>
        <topology evidence="3">Single-pass membrane protein</topology>
    </subcellularLocation>
</comment>
<comment type="similarity">
    <text evidence="3">Belongs to the Tom20 family.</text>
</comment>
<keyword id="KW-0472">Membrane</keyword>
<keyword id="KW-0496">Mitochondrion</keyword>
<keyword id="KW-1000">Mitochondrion outer membrane</keyword>
<keyword id="KW-0653">Protein transport</keyword>
<keyword id="KW-1185">Reference proteome</keyword>
<keyword id="KW-0812">Transmembrane</keyword>
<keyword id="KW-1133">Transmembrane helix</keyword>
<keyword id="KW-0813">Transport</keyword>
<protein>
    <recommendedName>
        <fullName>Mitochondrial import receptor subunit tom20</fullName>
    </recommendedName>
    <alternativeName>
        <fullName>Mitochondrial 20 kDa outer membrane protein</fullName>
    </alternativeName>
    <alternativeName>
        <fullName>Translocase of outer membrane 20 kDa subunit</fullName>
    </alternativeName>
</protein>